<reference key="1">
    <citation type="journal article" date="2005" name="Genome Res.">
        <title>Coping with cold: the genome of the versatile marine Antarctica bacterium Pseudoalteromonas haloplanktis TAC125.</title>
        <authorList>
            <person name="Medigue C."/>
            <person name="Krin E."/>
            <person name="Pascal G."/>
            <person name="Barbe V."/>
            <person name="Bernsel A."/>
            <person name="Bertin P.N."/>
            <person name="Cheung F."/>
            <person name="Cruveiller S."/>
            <person name="D'Amico S."/>
            <person name="Duilio A."/>
            <person name="Fang G."/>
            <person name="Feller G."/>
            <person name="Ho C."/>
            <person name="Mangenot S."/>
            <person name="Marino G."/>
            <person name="Nilsson J."/>
            <person name="Parrilli E."/>
            <person name="Rocha E.P.C."/>
            <person name="Rouy Z."/>
            <person name="Sekowska A."/>
            <person name="Tutino M.L."/>
            <person name="Vallenet D."/>
            <person name="von Heijne G."/>
            <person name="Danchin A."/>
        </authorList>
    </citation>
    <scope>NUCLEOTIDE SEQUENCE [LARGE SCALE GENOMIC DNA]</scope>
    <source>
        <strain>TAC 125</strain>
    </source>
</reference>
<feature type="chain" id="PRO_0000371071" description="ATP synthase subunit delta">
    <location>
        <begin position="1"/>
        <end position="177"/>
    </location>
</feature>
<proteinExistence type="inferred from homology"/>
<evidence type="ECO:0000255" key="1">
    <source>
        <dbReference type="HAMAP-Rule" id="MF_01416"/>
    </source>
</evidence>
<dbReference type="EMBL" id="CR954246">
    <property type="protein sequence ID" value="CAI88040.1"/>
    <property type="molecule type" value="Genomic_DNA"/>
</dbReference>
<dbReference type="SMR" id="Q3IK47"/>
<dbReference type="STRING" id="326442.PSHAa3011"/>
<dbReference type="KEGG" id="pha:PSHAa3011"/>
<dbReference type="PATRIC" id="fig|326442.8.peg.2901"/>
<dbReference type="eggNOG" id="COG0712">
    <property type="taxonomic scope" value="Bacteria"/>
</dbReference>
<dbReference type="HOGENOM" id="CLU_085114_3_0_6"/>
<dbReference type="BioCyc" id="PHAL326442:PSHA_RS14775-MONOMER"/>
<dbReference type="Proteomes" id="UP000006843">
    <property type="component" value="Chromosome I"/>
</dbReference>
<dbReference type="GO" id="GO:0005886">
    <property type="term" value="C:plasma membrane"/>
    <property type="evidence" value="ECO:0007669"/>
    <property type="project" value="UniProtKB-SubCell"/>
</dbReference>
<dbReference type="GO" id="GO:0045259">
    <property type="term" value="C:proton-transporting ATP synthase complex"/>
    <property type="evidence" value="ECO:0007669"/>
    <property type="project" value="UniProtKB-KW"/>
</dbReference>
<dbReference type="GO" id="GO:0046933">
    <property type="term" value="F:proton-transporting ATP synthase activity, rotational mechanism"/>
    <property type="evidence" value="ECO:0007669"/>
    <property type="project" value="UniProtKB-UniRule"/>
</dbReference>
<dbReference type="Gene3D" id="1.10.520.20">
    <property type="entry name" value="N-terminal domain of the delta subunit of the F1F0-ATP synthase"/>
    <property type="match status" value="1"/>
</dbReference>
<dbReference type="HAMAP" id="MF_01416">
    <property type="entry name" value="ATP_synth_delta_bact"/>
    <property type="match status" value="1"/>
</dbReference>
<dbReference type="InterPro" id="IPR026015">
    <property type="entry name" value="ATP_synth_OSCP/delta_N_sf"/>
</dbReference>
<dbReference type="InterPro" id="IPR000711">
    <property type="entry name" value="ATPase_OSCP/dsu"/>
</dbReference>
<dbReference type="NCBIfam" id="TIGR01145">
    <property type="entry name" value="ATP_synt_delta"/>
    <property type="match status" value="1"/>
</dbReference>
<dbReference type="NCBIfam" id="NF004402">
    <property type="entry name" value="PRK05758.2-2"/>
    <property type="match status" value="1"/>
</dbReference>
<dbReference type="NCBIfam" id="NF004404">
    <property type="entry name" value="PRK05758.2-5"/>
    <property type="match status" value="1"/>
</dbReference>
<dbReference type="PANTHER" id="PTHR11910">
    <property type="entry name" value="ATP SYNTHASE DELTA CHAIN"/>
    <property type="match status" value="1"/>
</dbReference>
<dbReference type="Pfam" id="PF00213">
    <property type="entry name" value="OSCP"/>
    <property type="match status" value="1"/>
</dbReference>
<dbReference type="PRINTS" id="PR00125">
    <property type="entry name" value="ATPASEDELTA"/>
</dbReference>
<dbReference type="SUPFAM" id="SSF47928">
    <property type="entry name" value="N-terminal domain of the delta subunit of the F1F0-ATP synthase"/>
    <property type="match status" value="1"/>
</dbReference>
<protein>
    <recommendedName>
        <fullName evidence="1">ATP synthase subunit delta</fullName>
    </recommendedName>
    <alternativeName>
        <fullName evidence="1">ATP synthase F(1) sector subunit delta</fullName>
    </alternativeName>
    <alternativeName>
        <fullName evidence="1">F-type ATPase subunit delta</fullName>
        <shortName evidence="1">F-ATPase subunit delta</shortName>
    </alternativeName>
</protein>
<accession>Q3IK47</accession>
<keyword id="KW-0066">ATP synthesis</keyword>
<keyword id="KW-0997">Cell inner membrane</keyword>
<keyword id="KW-1003">Cell membrane</keyword>
<keyword id="KW-0139">CF(1)</keyword>
<keyword id="KW-0375">Hydrogen ion transport</keyword>
<keyword id="KW-0406">Ion transport</keyword>
<keyword id="KW-0472">Membrane</keyword>
<keyword id="KW-1185">Reference proteome</keyword>
<keyword id="KW-0813">Transport</keyword>
<name>ATPD_PSET1</name>
<comment type="function">
    <text evidence="1">F(1)F(0) ATP synthase produces ATP from ADP in the presence of a proton or sodium gradient. F-type ATPases consist of two structural domains, F(1) containing the extramembraneous catalytic core and F(0) containing the membrane proton channel, linked together by a central stalk and a peripheral stalk. During catalysis, ATP synthesis in the catalytic domain of F(1) is coupled via a rotary mechanism of the central stalk subunits to proton translocation.</text>
</comment>
<comment type="function">
    <text evidence="1">This protein is part of the stalk that links CF(0) to CF(1). It either transmits conformational changes from CF(0) to CF(1) or is implicated in proton conduction.</text>
</comment>
<comment type="subunit">
    <text evidence="1">F-type ATPases have 2 components, F(1) - the catalytic core - and F(0) - the membrane proton channel. F(1) has five subunits: alpha(3), beta(3), gamma(1), delta(1), epsilon(1). F(0) has three main subunits: a(1), b(2) and c(10-14). The alpha and beta chains form an alternating ring which encloses part of the gamma chain. F(1) is attached to F(0) by a central stalk formed by the gamma and epsilon chains, while a peripheral stalk is formed by the delta and b chains.</text>
</comment>
<comment type="subcellular location">
    <subcellularLocation>
        <location evidence="1">Cell inner membrane</location>
        <topology evidence="1">Peripheral membrane protein</topology>
    </subcellularLocation>
</comment>
<comment type="similarity">
    <text evidence="1">Belongs to the ATPase delta chain family.</text>
</comment>
<gene>
    <name evidence="1" type="primary">atpH</name>
    <name type="ordered locus">PSHAa3011</name>
</gene>
<organism>
    <name type="scientific">Pseudoalteromonas translucida (strain TAC 125)</name>
    <dbReference type="NCBI Taxonomy" id="326442"/>
    <lineage>
        <taxon>Bacteria</taxon>
        <taxon>Pseudomonadati</taxon>
        <taxon>Pseudomonadota</taxon>
        <taxon>Gammaproteobacteria</taxon>
        <taxon>Alteromonadales</taxon>
        <taxon>Pseudoalteromonadaceae</taxon>
        <taxon>Pseudoalteromonas</taxon>
    </lineage>
</organism>
<sequence length="177" mass="18982">MSELTTIARPYAKAAFELAVEKGTIESWNEMLFFAGHVASNEKASALLAGMPTATTQAELFIQICAEQLNEQGQNLVKVMAENGRLIALPAVAQLFAKFKAEYDKEIDVDVISATPLVAAQQESLVAALEKRFARKVKLNCSEDAAVVGGLIIKAGDTVIDGSIRGKLNRLATTLQS</sequence>